<accession>B5BKB5</accession>
<feature type="chain" id="PRO_1000125864" description="Ion-translocating oxidoreductase complex subunit E">
    <location>
        <begin position="1"/>
        <end position="230"/>
    </location>
</feature>
<feature type="transmembrane region" description="Helical" evidence="1">
    <location>
        <begin position="22"/>
        <end position="42"/>
    </location>
</feature>
<feature type="transmembrane region" description="Helical" evidence="1">
    <location>
        <begin position="63"/>
        <end position="83"/>
    </location>
</feature>
<feature type="transmembrane region" description="Helical" evidence="1">
    <location>
        <begin position="86"/>
        <end position="106"/>
    </location>
</feature>
<feature type="transmembrane region" description="Helical" evidence="1">
    <location>
        <begin position="125"/>
        <end position="145"/>
    </location>
</feature>
<feature type="transmembrane region" description="Helical" evidence="1">
    <location>
        <begin position="182"/>
        <end position="202"/>
    </location>
</feature>
<gene>
    <name evidence="1" type="primary">rsxE</name>
    <name type="ordered locus">SSPA1299</name>
</gene>
<reference key="1">
    <citation type="journal article" date="2009" name="BMC Genomics">
        <title>Pseudogene accumulation in the evolutionary histories of Salmonella enterica serovars Paratyphi A and Typhi.</title>
        <authorList>
            <person name="Holt K.E."/>
            <person name="Thomson N.R."/>
            <person name="Wain J."/>
            <person name="Langridge G.C."/>
            <person name="Hasan R."/>
            <person name="Bhutta Z.A."/>
            <person name="Quail M.A."/>
            <person name="Norbertczak H."/>
            <person name="Walker D."/>
            <person name="Simmonds M."/>
            <person name="White B."/>
            <person name="Bason N."/>
            <person name="Mungall K."/>
            <person name="Dougan G."/>
            <person name="Parkhill J."/>
        </authorList>
    </citation>
    <scope>NUCLEOTIDE SEQUENCE [LARGE SCALE GENOMIC DNA]</scope>
    <source>
        <strain>AKU_12601</strain>
    </source>
</reference>
<keyword id="KW-0997">Cell inner membrane</keyword>
<keyword id="KW-1003">Cell membrane</keyword>
<keyword id="KW-0249">Electron transport</keyword>
<keyword id="KW-0472">Membrane</keyword>
<keyword id="KW-1278">Translocase</keyword>
<keyword id="KW-0812">Transmembrane</keyword>
<keyword id="KW-1133">Transmembrane helix</keyword>
<keyword id="KW-0813">Transport</keyword>
<evidence type="ECO:0000255" key="1">
    <source>
        <dbReference type="HAMAP-Rule" id="MF_00478"/>
    </source>
</evidence>
<proteinExistence type="inferred from homology"/>
<sequence length="230" mass="24348">MSEIKDIVVQGLWKNNSALVQLLGLCPLLAVTSTATNALGLGLATTLVLTLTNLTVSTLRRWTPAEIRIPIYVMIIASVVSAVQMLINAYAFGLYQSLGIFIPLIVTNCIVVGRAEAFAAKKGPWLSALDGFSIGMGATGAMFVLGSLREILGNGTLFDGADSLLGGWAKVLRVEIFHTDSPFLLAMLPPGAFIGLGLMLAVKYLIDEKMKKRRAETAPSAVPAGETGKV</sequence>
<comment type="function">
    <text evidence="1">Part of a membrane-bound complex that couples electron transfer with translocation of ions across the membrane. Required to maintain the reduced state of SoxR.</text>
</comment>
<comment type="subunit">
    <text evidence="1">The complex is composed of six subunits: RsxA, RsxB, RsxC, RsxD, RsxE and RsxG.</text>
</comment>
<comment type="subcellular location">
    <subcellularLocation>
        <location evidence="1">Cell inner membrane</location>
        <topology evidence="1">Multi-pass membrane protein</topology>
    </subcellularLocation>
</comment>
<comment type="similarity">
    <text evidence="1">Belongs to the NqrDE/RnfAE family.</text>
</comment>
<protein>
    <recommendedName>
        <fullName evidence="1">Ion-translocating oxidoreductase complex subunit E</fullName>
        <ecNumber evidence="1">7.-.-.-</ecNumber>
    </recommendedName>
    <alternativeName>
        <fullName evidence="1">Rsx electron transport complex subunit E</fullName>
    </alternativeName>
</protein>
<organism>
    <name type="scientific">Salmonella paratyphi A (strain AKU_12601)</name>
    <dbReference type="NCBI Taxonomy" id="554290"/>
    <lineage>
        <taxon>Bacteria</taxon>
        <taxon>Pseudomonadati</taxon>
        <taxon>Pseudomonadota</taxon>
        <taxon>Gammaproteobacteria</taxon>
        <taxon>Enterobacterales</taxon>
        <taxon>Enterobacteriaceae</taxon>
        <taxon>Salmonella</taxon>
    </lineage>
</organism>
<name>RSXE_SALPK</name>
<dbReference type="EC" id="7.-.-.-" evidence="1"/>
<dbReference type="EMBL" id="FM200053">
    <property type="protein sequence ID" value="CAR59474.1"/>
    <property type="molecule type" value="Genomic_DNA"/>
</dbReference>
<dbReference type="RefSeq" id="WP_001289632.1">
    <property type="nucleotide sequence ID" value="NC_011147.1"/>
</dbReference>
<dbReference type="SMR" id="B5BKB5"/>
<dbReference type="KEGG" id="sek:SSPA1299"/>
<dbReference type="HOGENOM" id="CLU_046659_1_0_6"/>
<dbReference type="Proteomes" id="UP000001869">
    <property type="component" value="Chromosome"/>
</dbReference>
<dbReference type="GO" id="GO:0005886">
    <property type="term" value="C:plasma membrane"/>
    <property type="evidence" value="ECO:0007669"/>
    <property type="project" value="UniProtKB-SubCell"/>
</dbReference>
<dbReference type="GO" id="GO:0022900">
    <property type="term" value="P:electron transport chain"/>
    <property type="evidence" value="ECO:0007669"/>
    <property type="project" value="UniProtKB-UniRule"/>
</dbReference>
<dbReference type="HAMAP" id="MF_00478">
    <property type="entry name" value="RsxE_RnfE"/>
    <property type="match status" value="1"/>
</dbReference>
<dbReference type="InterPro" id="IPR003667">
    <property type="entry name" value="NqrDE/RnfAE"/>
</dbReference>
<dbReference type="InterPro" id="IPR010968">
    <property type="entry name" value="RnfE"/>
</dbReference>
<dbReference type="NCBIfam" id="NF009070">
    <property type="entry name" value="PRK12405.1"/>
    <property type="match status" value="1"/>
</dbReference>
<dbReference type="NCBIfam" id="TIGR01948">
    <property type="entry name" value="rnfE"/>
    <property type="match status" value="1"/>
</dbReference>
<dbReference type="PANTHER" id="PTHR30586">
    <property type="entry name" value="ELECTRON TRANSPORT COMPLEX PROTEIN RNFE"/>
    <property type="match status" value="1"/>
</dbReference>
<dbReference type="PANTHER" id="PTHR30586:SF0">
    <property type="entry name" value="ION-TRANSLOCATING OXIDOREDUCTASE COMPLEX SUBUNIT E"/>
    <property type="match status" value="1"/>
</dbReference>
<dbReference type="Pfam" id="PF02508">
    <property type="entry name" value="Rnf-Nqr"/>
    <property type="match status" value="1"/>
</dbReference>
<dbReference type="PIRSF" id="PIRSF006102">
    <property type="entry name" value="NQR_DE"/>
    <property type="match status" value="1"/>
</dbReference>